<reference key="1">
    <citation type="journal article" date="2005" name="Nature">
        <title>The DNA sequence of the human X chromosome.</title>
        <authorList>
            <person name="Ross M.T."/>
            <person name="Grafham D.V."/>
            <person name="Coffey A.J."/>
            <person name="Scherer S."/>
            <person name="McLay K."/>
            <person name="Muzny D."/>
            <person name="Platzer M."/>
            <person name="Howell G.R."/>
            <person name="Burrows C."/>
            <person name="Bird C.P."/>
            <person name="Frankish A."/>
            <person name="Lovell F.L."/>
            <person name="Howe K.L."/>
            <person name="Ashurst J.L."/>
            <person name="Fulton R.S."/>
            <person name="Sudbrak R."/>
            <person name="Wen G."/>
            <person name="Jones M.C."/>
            <person name="Hurles M.E."/>
            <person name="Andrews T.D."/>
            <person name="Scott C.E."/>
            <person name="Searle S."/>
            <person name="Ramser J."/>
            <person name="Whittaker A."/>
            <person name="Deadman R."/>
            <person name="Carter N.P."/>
            <person name="Hunt S.E."/>
            <person name="Chen R."/>
            <person name="Cree A."/>
            <person name="Gunaratne P."/>
            <person name="Havlak P."/>
            <person name="Hodgson A."/>
            <person name="Metzker M.L."/>
            <person name="Richards S."/>
            <person name="Scott G."/>
            <person name="Steffen D."/>
            <person name="Sodergren E."/>
            <person name="Wheeler D.A."/>
            <person name="Worley K.C."/>
            <person name="Ainscough R."/>
            <person name="Ambrose K.D."/>
            <person name="Ansari-Lari M.A."/>
            <person name="Aradhya S."/>
            <person name="Ashwell R.I."/>
            <person name="Babbage A.K."/>
            <person name="Bagguley C.L."/>
            <person name="Ballabio A."/>
            <person name="Banerjee R."/>
            <person name="Barker G.E."/>
            <person name="Barlow K.F."/>
            <person name="Barrett I.P."/>
            <person name="Bates K.N."/>
            <person name="Beare D.M."/>
            <person name="Beasley H."/>
            <person name="Beasley O."/>
            <person name="Beck A."/>
            <person name="Bethel G."/>
            <person name="Blechschmidt K."/>
            <person name="Brady N."/>
            <person name="Bray-Allen S."/>
            <person name="Bridgeman A.M."/>
            <person name="Brown A.J."/>
            <person name="Brown M.J."/>
            <person name="Bonnin D."/>
            <person name="Bruford E.A."/>
            <person name="Buhay C."/>
            <person name="Burch P."/>
            <person name="Burford D."/>
            <person name="Burgess J."/>
            <person name="Burrill W."/>
            <person name="Burton J."/>
            <person name="Bye J.M."/>
            <person name="Carder C."/>
            <person name="Carrel L."/>
            <person name="Chako J."/>
            <person name="Chapman J.C."/>
            <person name="Chavez D."/>
            <person name="Chen E."/>
            <person name="Chen G."/>
            <person name="Chen Y."/>
            <person name="Chen Z."/>
            <person name="Chinault C."/>
            <person name="Ciccodicola A."/>
            <person name="Clark S.Y."/>
            <person name="Clarke G."/>
            <person name="Clee C.M."/>
            <person name="Clegg S."/>
            <person name="Clerc-Blankenburg K."/>
            <person name="Clifford K."/>
            <person name="Cobley V."/>
            <person name="Cole C.G."/>
            <person name="Conquer J.S."/>
            <person name="Corby N."/>
            <person name="Connor R.E."/>
            <person name="David R."/>
            <person name="Davies J."/>
            <person name="Davis C."/>
            <person name="Davis J."/>
            <person name="Delgado O."/>
            <person name="Deshazo D."/>
            <person name="Dhami P."/>
            <person name="Ding Y."/>
            <person name="Dinh H."/>
            <person name="Dodsworth S."/>
            <person name="Draper H."/>
            <person name="Dugan-Rocha S."/>
            <person name="Dunham A."/>
            <person name="Dunn M."/>
            <person name="Durbin K.J."/>
            <person name="Dutta I."/>
            <person name="Eades T."/>
            <person name="Ellwood M."/>
            <person name="Emery-Cohen A."/>
            <person name="Errington H."/>
            <person name="Evans K.L."/>
            <person name="Faulkner L."/>
            <person name="Francis F."/>
            <person name="Frankland J."/>
            <person name="Fraser A.E."/>
            <person name="Galgoczy P."/>
            <person name="Gilbert J."/>
            <person name="Gill R."/>
            <person name="Gloeckner G."/>
            <person name="Gregory S.G."/>
            <person name="Gribble S."/>
            <person name="Griffiths C."/>
            <person name="Grocock R."/>
            <person name="Gu Y."/>
            <person name="Gwilliam R."/>
            <person name="Hamilton C."/>
            <person name="Hart E.A."/>
            <person name="Hawes A."/>
            <person name="Heath P.D."/>
            <person name="Heitmann K."/>
            <person name="Hennig S."/>
            <person name="Hernandez J."/>
            <person name="Hinzmann B."/>
            <person name="Ho S."/>
            <person name="Hoffs M."/>
            <person name="Howden P.J."/>
            <person name="Huckle E.J."/>
            <person name="Hume J."/>
            <person name="Hunt P.J."/>
            <person name="Hunt A.R."/>
            <person name="Isherwood J."/>
            <person name="Jacob L."/>
            <person name="Johnson D."/>
            <person name="Jones S."/>
            <person name="de Jong P.J."/>
            <person name="Joseph S.S."/>
            <person name="Keenan S."/>
            <person name="Kelly S."/>
            <person name="Kershaw J.K."/>
            <person name="Khan Z."/>
            <person name="Kioschis P."/>
            <person name="Klages S."/>
            <person name="Knights A.J."/>
            <person name="Kosiura A."/>
            <person name="Kovar-Smith C."/>
            <person name="Laird G.K."/>
            <person name="Langford C."/>
            <person name="Lawlor S."/>
            <person name="Leversha M."/>
            <person name="Lewis L."/>
            <person name="Liu W."/>
            <person name="Lloyd C."/>
            <person name="Lloyd D.M."/>
            <person name="Loulseged H."/>
            <person name="Loveland J.E."/>
            <person name="Lovell J.D."/>
            <person name="Lozado R."/>
            <person name="Lu J."/>
            <person name="Lyne R."/>
            <person name="Ma J."/>
            <person name="Maheshwari M."/>
            <person name="Matthews L.H."/>
            <person name="McDowall J."/>
            <person name="McLaren S."/>
            <person name="McMurray A."/>
            <person name="Meidl P."/>
            <person name="Meitinger T."/>
            <person name="Milne S."/>
            <person name="Miner G."/>
            <person name="Mistry S.L."/>
            <person name="Morgan M."/>
            <person name="Morris S."/>
            <person name="Mueller I."/>
            <person name="Mullikin J.C."/>
            <person name="Nguyen N."/>
            <person name="Nordsiek G."/>
            <person name="Nyakatura G."/>
            <person name="O'dell C.N."/>
            <person name="Okwuonu G."/>
            <person name="Palmer S."/>
            <person name="Pandian R."/>
            <person name="Parker D."/>
            <person name="Parrish J."/>
            <person name="Pasternak S."/>
            <person name="Patel D."/>
            <person name="Pearce A.V."/>
            <person name="Pearson D.M."/>
            <person name="Pelan S.E."/>
            <person name="Perez L."/>
            <person name="Porter K.M."/>
            <person name="Ramsey Y."/>
            <person name="Reichwald K."/>
            <person name="Rhodes S."/>
            <person name="Ridler K.A."/>
            <person name="Schlessinger D."/>
            <person name="Schueler M.G."/>
            <person name="Sehra H.K."/>
            <person name="Shaw-Smith C."/>
            <person name="Shen H."/>
            <person name="Sheridan E.M."/>
            <person name="Shownkeen R."/>
            <person name="Skuce C.D."/>
            <person name="Smith M.L."/>
            <person name="Sotheran E.C."/>
            <person name="Steingruber H.E."/>
            <person name="Steward C.A."/>
            <person name="Storey R."/>
            <person name="Swann R.M."/>
            <person name="Swarbreck D."/>
            <person name="Tabor P.E."/>
            <person name="Taudien S."/>
            <person name="Taylor T."/>
            <person name="Teague B."/>
            <person name="Thomas K."/>
            <person name="Thorpe A."/>
            <person name="Timms K."/>
            <person name="Tracey A."/>
            <person name="Trevanion S."/>
            <person name="Tromans A.C."/>
            <person name="d'Urso M."/>
            <person name="Verduzco D."/>
            <person name="Villasana D."/>
            <person name="Waldron L."/>
            <person name="Wall M."/>
            <person name="Wang Q."/>
            <person name="Warren J."/>
            <person name="Warry G.L."/>
            <person name="Wei X."/>
            <person name="West A."/>
            <person name="Whitehead S.L."/>
            <person name="Whiteley M.N."/>
            <person name="Wilkinson J.E."/>
            <person name="Willey D.L."/>
            <person name="Williams G."/>
            <person name="Williams L."/>
            <person name="Williamson A."/>
            <person name="Williamson H."/>
            <person name="Wilming L."/>
            <person name="Woodmansey R.L."/>
            <person name="Wray P.W."/>
            <person name="Yen J."/>
            <person name="Zhang J."/>
            <person name="Zhou J."/>
            <person name="Zoghbi H."/>
            <person name="Zorilla S."/>
            <person name="Buck D."/>
            <person name="Reinhardt R."/>
            <person name="Poustka A."/>
            <person name="Rosenthal A."/>
            <person name="Lehrach H."/>
            <person name="Meindl A."/>
            <person name="Minx P.J."/>
            <person name="Hillier L.W."/>
            <person name="Willard H.F."/>
            <person name="Wilson R.K."/>
            <person name="Waterston R.H."/>
            <person name="Rice C.M."/>
            <person name="Vaudin M."/>
            <person name="Coulson A."/>
            <person name="Nelson D.L."/>
            <person name="Weinstock G."/>
            <person name="Sulston J.E."/>
            <person name="Durbin R.M."/>
            <person name="Hubbard T."/>
            <person name="Gibbs R.A."/>
            <person name="Beck S."/>
            <person name="Rogers J."/>
            <person name="Bentley D.R."/>
        </authorList>
    </citation>
    <scope>NUCLEOTIDE SEQUENCE [LARGE SCALE GENOMIC DNA]</scope>
</reference>
<organism>
    <name type="scientific">Homo sapiens</name>
    <name type="common">Human</name>
    <dbReference type="NCBI Taxonomy" id="9606"/>
    <lineage>
        <taxon>Eukaryota</taxon>
        <taxon>Metazoa</taxon>
        <taxon>Chordata</taxon>
        <taxon>Craniata</taxon>
        <taxon>Vertebrata</taxon>
        <taxon>Euteleostomi</taxon>
        <taxon>Mammalia</taxon>
        <taxon>Eutheria</taxon>
        <taxon>Euarchontoglires</taxon>
        <taxon>Primates</taxon>
        <taxon>Haplorrhini</taxon>
        <taxon>Catarrhini</taxon>
        <taxon>Hominidae</taxon>
        <taxon>Homo</taxon>
    </lineage>
</organism>
<protein>
    <recommendedName>
        <fullName evidence="3">Cancer/testis antigen family 45 member A7</fullName>
    </recommendedName>
    <alternativeName>
        <fullName evidence="2">Cancer/testis antigen 45A7</fullName>
    </alternativeName>
</protein>
<name>CT457_HUMAN</name>
<comment type="similarity">
    <text>Belongs to the CT45 family.</text>
</comment>
<keyword id="KW-1185">Reference proteome</keyword>
<dbReference type="EMBL" id="AC240441">
    <property type="status" value="NOT_ANNOTATED_CDS"/>
    <property type="molecule type" value="Genomic_DNA"/>
</dbReference>
<dbReference type="CCDS" id="CCDS76032.1"/>
<dbReference type="RefSeq" id="NP_001017438.2">
    <property type="nucleotide sequence ID" value="NM_001017438.2"/>
</dbReference>
<dbReference type="RefSeq" id="NP_001278472.1">
    <property type="nucleotide sequence ID" value="NM_001291543.2"/>
</dbReference>
<dbReference type="RefSeq" id="NP_001381597.1">
    <property type="nucleotide sequence ID" value="NM_001394668.1"/>
</dbReference>
<dbReference type="RefSeq" id="XP_003960131.1">
    <property type="nucleotide sequence ID" value="XM_003960082.4"/>
</dbReference>
<dbReference type="RefSeq" id="XP_005262482.2">
    <property type="nucleotide sequence ID" value="XM_005262425.4"/>
</dbReference>
<dbReference type="RefSeq" id="XP_011529531.1">
    <property type="nucleotide sequence ID" value="XM_011531229.3"/>
</dbReference>
<dbReference type="RefSeq" id="XP_011529643.1">
    <property type="nucleotide sequence ID" value="XM_011531341.2"/>
</dbReference>
<dbReference type="RefSeq" id="XP_011529653.1">
    <property type="nucleotide sequence ID" value="XM_011531351.1"/>
</dbReference>
<dbReference type="SMR" id="P0DMV0"/>
<dbReference type="FunCoup" id="P0DMV0">
    <property type="interactions" value="2"/>
</dbReference>
<dbReference type="IntAct" id="P0DMV0">
    <property type="interactions" value="1"/>
</dbReference>
<dbReference type="iPTMnet" id="P0DMV0"/>
<dbReference type="PhosphoSitePlus" id="P0DMV0"/>
<dbReference type="BioMuta" id="CT45A7"/>
<dbReference type="jPOST" id="P0DMV0"/>
<dbReference type="MassIVE" id="P0DMV0"/>
<dbReference type="Pumba" id="P0DMV0"/>
<dbReference type="Antibodypedia" id="80868">
    <property type="antibodies" value="1 antibodies from 1 providers"/>
</dbReference>
<dbReference type="DNASU" id="441521"/>
<dbReference type="Ensembl" id="ENST00000610598.5">
    <property type="protein sequence ID" value="ENSP00000482241.1"/>
    <property type="gene ID" value="ENSG00000273696.5"/>
</dbReference>
<dbReference type="Ensembl" id="ENST00000620885.1">
    <property type="protein sequence ID" value="ENSP00000480765.1"/>
    <property type="gene ID" value="ENSG00000273696.5"/>
</dbReference>
<dbReference type="GeneID" id="101060211"/>
<dbReference type="GeneID" id="441521"/>
<dbReference type="GeneID" id="541465"/>
<dbReference type="KEGG" id="hsa:101060211"/>
<dbReference type="KEGG" id="hsa:441521"/>
<dbReference type="KEGG" id="hsa:541465"/>
<dbReference type="MANE-Select" id="ENST00000610598.5">
    <property type="protein sequence ID" value="ENSP00000482241.1"/>
    <property type="RefSeq nucleotide sequence ID" value="NM_001394668.1"/>
    <property type="RefSeq protein sequence ID" value="NP_001381597.1"/>
</dbReference>
<dbReference type="AGR" id="HGNC:33270"/>
<dbReference type="AGR" id="HGNC:33271"/>
<dbReference type="AGR" id="HGNC:51260"/>
<dbReference type="CTD" id="101060211"/>
<dbReference type="CTD" id="441521"/>
<dbReference type="CTD" id="541465"/>
<dbReference type="GeneCards" id="CT45A7"/>
<dbReference type="HGNC" id="HGNC:51260">
    <property type="gene designation" value="CT45A7"/>
</dbReference>
<dbReference type="HPA" id="ENSG00000273696">
    <property type="expression patterns" value="Not detected"/>
</dbReference>
<dbReference type="neXtProt" id="NX_P0DMV0"/>
<dbReference type="OpenTargets" id="ENSG00000228836"/>
<dbReference type="OpenTargets" id="ENSG00000278289"/>
<dbReference type="VEuPathDB" id="HostDB:ENSG00000273696"/>
<dbReference type="GeneTree" id="ENSGT00390000016655"/>
<dbReference type="InParanoid" id="P0DMV0"/>
<dbReference type="OMA" id="EIKCALM"/>
<dbReference type="OrthoDB" id="9520782at2759"/>
<dbReference type="PAN-GO" id="P0DMV0">
    <property type="GO annotations" value="2 GO annotations based on evolutionary models"/>
</dbReference>
<dbReference type="PhylomeDB" id="P0DMV0"/>
<dbReference type="PathwayCommons" id="P0DMV0"/>
<dbReference type="SignaLink" id="P0DMV0"/>
<dbReference type="BioGRID-ORCS" id="101060211">
    <property type="hits" value="9 hits in 105 CRISPR screens"/>
</dbReference>
<dbReference type="BioGRID-ORCS" id="441521">
    <property type="hits" value="8 hits in 672 CRISPR screens"/>
</dbReference>
<dbReference type="BioGRID-ORCS" id="541465">
    <property type="hits" value="5 hits in 218 CRISPR screens"/>
</dbReference>
<dbReference type="Pharos" id="P0DMV0">
    <property type="development level" value="Tdark"/>
</dbReference>
<dbReference type="PRO" id="PR:P0DMV0"/>
<dbReference type="Proteomes" id="UP000005640">
    <property type="component" value="Chromosome X"/>
</dbReference>
<dbReference type="RNAct" id="P0DMV0">
    <property type="molecule type" value="protein"/>
</dbReference>
<dbReference type="Bgee" id="ENSG00000273696">
    <property type="expression patterns" value="Expressed in primordial germ cell in gonad and 40 other cell types or tissues"/>
</dbReference>
<dbReference type="InterPro" id="IPR029307">
    <property type="entry name" value="INT_SG_DDX_CT_C"/>
</dbReference>
<dbReference type="InterPro" id="IPR051113">
    <property type="entry name" value="Integrator_subunit6"/>
</dbReference>
<dbReference type="PANTHER" id="PTHR12957">
    <property type="entry name" value="DEAD/H BOX POLYPEPTIDE 26/DICE1-RELATED"/>
    <property type="match status" value="1"/>
</dbReference>
<dbReference type="PANTHER" id="PTHR12957:SF2">
    <property type="entry name" value="INTEGRATOR COMPLEX SUBUNIT 6"/>
    <property type="match status" value="1"/>
</dbReference>
<dbReference type="Pfam" id="PF15300">
    <property type="entry name" value="INT_SG_DDX_CT_C"/>
    <property type="match status" value="1"/>
</dbReference>
<gene>
    <name evidence="3" type="primary">CT45A7</name>
</gene>
<sequence>MTDKTEKVAVDPETVFKRPRECDSPSYQKRQRMALLARKQGAGDSLIAGSAMSKEKKLMTGHAIPPSQLDSQIDDFTGFSKDGMMQKPGSNAPVGGNVTSSFSGDDLECRETASSPKSQREINADIKRKLVKELRCVGQKYEKIFEMLEGVQGPTAVRKRFFESIIKEAARCMRRDFVKHLKKKLKRMI</sequence>
<proteinExistence type="inferred from homology"/>
<evidence type="ECO:0000256" key="1">
    <source>
        <dbReference type="SAM" id="MobiDB-lite"/>
    </source>
</evidence>
<evidence type="ECO:0000305" key="2"/>
<evidence type="ECO:0000312" key="3">
    <source>
        <dbReference type="HGNC" id="HGNC:51260"/>
    </source>
</evidence>
<feature type="chain" id="PRO_0000433029" description="Cancer/testis antigen family 45 member A7">
    <location>
        <begin position="1"/>
        <end position="189"/>
    </location>
</feature>
<feature type="region of interest" description="Disordered" evidence="1">
    <location>
        <begin position="1"/>
        <end position="27"/>
    </location>
</feature>
<feature type="region of interest" description="Disordered" evidence="1">
    <location>
        <begin position="82"/>
        <end position="118"/>
    </location>
</feature>
<feature type="compositionally biased region" description="Basic and acidic residues" evidence="1">
    <location>
        <begin position="1"/>
        <end position="23"/>
    </location>
</feature>
<accession>P0DMV0</accession>